<comment type="subunit">
    <text evidence="3">Interacts with sad1.</text>
</comment>
<comment type="subcellular location">
    <subcellularLocation>
        <location evidence="5">Membrane</location>
        <topology evidence="5">Multi-pass membrane protein</topology>
    </subcellularLocation>
</comment>
<comment type="similarity">
    <text evidence="5">Belongs to the CorA metal ion transporter (MIT) (TC 1.A.35) family.</text>
</comment>
<evidence type="ECO:0000255" key="1"/>
<evidence type="ECO:0000256" key="2">
    <source>
        <dbReference type="SAM" id="MobiDB-lite"/>
    </source>
</evidence>
<evidence type="ECO:0000269" key="3">
    <source>
    </source>
</evidence>
<evidence type="ECO:0000269" key="4">
    <source>
    </source>
</evidence>
<evidence type="ECO:0000305" key="5"/>
<reference key="1">
    <citation type="journal article" date="2002" name="Nature">
        <title>The genome sequence of Schizosaccharomyces pombe.</title>
        <authorList>
            <person name="Wood V."/>
            <person name="Gwilliam R."/>
            <person name="Rajandream M.A."/>
            <person name="Lyne M.H."/>
            <person name="Lyne R."/>
            <person name="Stewart A."/>
            <person name="Sgouros J.G."/>
            <person name="Peat N."/>
            <person name="Hayles J."/>
            <person name="Baker S.G."/>
            <person name="Basham D."/>
            <person name="Bowman S."/>
            <person name="Brooks K."/>
            <person name="Brown D."/>
            <person name="Brown S."/>
            <person name="Chillingworth T."/>
            <person name="Churcher C.M."/>
            <person name="Collins M."/>
            <person name="Connor R."/>
            <person name="Cronin A."/>
            <person name="Davis P."/>
            <person name="Feltwell T."/>
            <person name="Fraser A."/>
            <person name="Gentles S."/>
            <person name="Goble A."/>
            <person name="Hamlin N."/>
            <person name="Harris D.E."/>
            <person name="Hidalgo J."/>
            <person name="Hodgson G."/>
            <person name="Holroyd S."/>
            <person name="Hornsby T."/>
            <person name="Howarth S."/>
            <person name="Huckle E.J."/>
            <person name="Hunt S."/>
            <person name="Jagels K."/>
            <person name="James K.D."/>
            <person name="Jones L."/>
            <person name="Jones M."/>
            <person name="Leather S."/>
            <person name="McDonald S."/>
            <person name="McLean J."/>
            <person name="Mooney P."/>
            <person name="Moule S."/>
            <person name="Mungall K.L."/>
            <person name="Murphy L.D."/>
            <person name="Niblett D."/>
            <person name="Odell C."/>
            <person name="Oliver K."/>
            <person name="O'Neil S."/>
            <person name="Pearson D."/>
            <person name="Quail M.A."/>
            <person name="Rabbinowitsch E."/>
            <person name="Rutherford K.M."/>
            <person name="Rutter S."/>
            <person name="Saunders D."/>
            <person name="Seeger K."/>
            <person name="Sharp S."/>
            <person name="Skelton J."/>
            <person name="Simmonds M.N."/>
            <person name="Squares R."/>
            <person name="Squares S."/>
            <person name="Stevens K."/>
            <person name="Taylor K."/>
            <person name="Taylor R.G."/>
            <person name="Tivey A."/>
            <person name="Walsh S.V."/>
            <person name="Warren T."/>
            <person name="Whitehead S."/>
            <person name="Woodward J.R."/>
            <person name="Volckaert G."/>
            <person name="Aert R."/>
            <person name="Robben J."/>
            <person name="Grymonprez B."/>
            <person name="Weltjens I."/>
            <person name="Vanstreels E."/>
            <person name="Rieger M."/>
            <person name="Schaefer M."/>
            <person name="Mueller-Auer S."/>
            <person name="Gabel C."/>
            <person name="Fuchs M."/>
            <person name="Duesterhoeft A."/>
            <person name="Fritzc C."/>
            <person name="Holzer E."/>
            <person name="Moestl D."/>
            <person name="Hilbert H."/>
            <person name="Borzym K."/>
            <person name="Langer I."/>
            <person name="Beck A."/>
            <person name="Lehrach H."/>
            <person name="Reinhardt R."/>
            <person name="Pohl T.M."/>
            <person name="Eger P."/>
            <person name="Zimmermann W."/>
            <person name="Wedler H."/>
            <person name="Wambutt R."/>
            <person name="Purnelle B."/>
            <person name="Goffeau A."/>
            <person name="Cadieu E."/>
            <person name="Dreano S."/>
            <person name="Gloux S."/>
            <person name="Lelaure V."/>
            <person name="Mottier S."/>
            <person name="Galibert F."/>
            <person name="Aves S.J."/>
            <person name="Xiang Z."/>
            <person name="Hunt C."/>
            <person name="Moore K."/>
            <person name="Hurst S.M."/>
            <person name="Lucas M."/>
            <person name="Rochet M."/>
            <person name="Gaillardin C."/>
            <person name="Tallada V.A."/>
            <person name="Garzon A."/>
            <person name="Thode G."/>
            <person name="Daga R.R."/>
            <person name="Cruzado L."/>
            <person name="Jimenez J."/>
            <person name="Sanchez M."/>
            <person name="del Rey F."/>
            <person name="Benito J."/>
            <person name="Dominguez A."/>
            <person name="Revuelta J.L."/>
            <person name="Moreno S."/>
            <person name="Armstrong J."/>
            <person name="Forsburg S.L."/>
            <person name="Cerutti L."/>
            <person name="Lowe T."/>
            <person name="McCombie W.R."/>
            <person name="Paulsen I."/>
            <person name="Potashkin J."/>
            <person name="Shpakovski G.V."/>
            <person name="Ussery D."/>
            <person name="Barrell B.G."/>
            <person name="Nurse P."/>
        </authorList>
    </citation>
    <scope>NUCLEOTIDE SEQUENCE [LARGE SCALE GENOMIC DNA]</scope>
    <source>
        <strain>972 / ATCC 24843</strain>
    </source>
</reference>
<reference key="2">
    <citation type="journal article" date="2004" name="Mol. Genet. Genomics">
        <title>Two-hybrid search for proteins that interact with Sad1 and Kms1, two membrane-bound components of the spindle pole body in fission yeast.</title>
        <authorList>
            <person name="Miki F."/>
            <person name="Kurabayashi A."/>
            <person name="Tange Y."/>
            <person name="Okazaki K."/>
            <person name="Shimanuki M."/>
            <person name="Niwa O."/>
        </authorList>
    </citation>
    <scope>INTERACTION WITH SAD1</scope>
</reference>
<reference key="3">
    <citation type="journal article" date="2008" name="J. Proteome Res.">
        <title>Phosphoproteome analysis of fission yeast.</title>
        <authorList>
            <person name="Wilson-Grady J.T."/>
            <person name="Villen J."/>
            <person name="Gygi S.P."/>
        </authorList>
    </citation>
    <scope>PHOSPHORYLATION [LARGE SCALE ANALYSIS] AT SER-105; SER-152; SER-162; SER-226 AND SER-241</scope>
    <scope>IDENTIFICATION BY MASS SPECTROMETRY</scope>
</reference>
<sequence>MPSNTSRSVPTGFYYKQNARMQNRPRFSDRKHSSKSKHRFPVDPSLQPDEADEGTRLLGNSDSDLLEPPSEHSSNGEDDKDINNPPSMPSSVCSSPKSPHRHYESDEDIENISLPESHPEDIQRKEFETENGKNTRDQPSPLAEVSDFAISSPHVYPKSANSHDSHYEQFANNDVTESAVDDHPATRKLSRDELYLPISPNNAQEPKFSVLDEWTKKMVANFEEYSVEDVDKRRERNRKLSEPLLVNGRYRVRDRWAQFRKSEIEKPYRFTFFTDELPSTIHSHEMWELVHDGQSFEDLFHSGGTWWLDVSCPKEEEIRVLAKAFGIHPLTVEDITLEEDREKVELFRTYYFVTFRSFNQLPSNSEYLKPLNFYLVVFRDGIITFHMNPTPHPANVRRRIRQLNGYLTVNADWIAYALLDDTTDAFAPFIEQIEDEVDTIDSMILSIHYDHVMEVKPQERMLQRVGECRKLIMSLLRLLANKADVVRGLSKRCNESWQVAPRGEIALYLGDVQDHIVTMVQNLNHYEKILSRSHSNYLAQISINMTLVSNETNEVLSRLTILGTILIPLNLVTGLWGMNVKVPGQDVPGLGWFFSILGSLMIFAISSFILCKWYKVI</sequence>
<dbReference type="EMBL" id="CU329670">
    <property type="protein sequence ID" value="CAB16566.2"/>
    <property type="molecule type" value="Genomic_DNA"/>
</dbReference>
<dbReference type="PIR" id="T37815">
    <property type="entry name" value="T37815"/>
</dbReference>
<dbReference type="PIR" id="T37833">
    <property type="entry name" value="T37833"/>
</dbReference>
<dbReference type="RefSeq" id="XP_001713086.1">
    <property type="nucleotide sequence ID" value="XM_001713034.2"/>
</dbReference>
<dbReference type="SMR" id="O13779"/>
<dbReference type="BioGRID" id="858055">
    <property type="interactions" value="10"/>
</dbReference>
<dbReference type="FunCoup" id="O13779">
    <property type="interactions" value="23"/>
</dbReference>
<dbReference type="IntAct" id="O13779">
    <property type="interactions" value="1"/>
</dbReference>
<dbReference type="STRING" id="284812.O13779"/>
<dbReference type="iPTMnet" id="O13779"/>
<dbReference type="SwissPalm" id="O13779"/>
<dbReference type="PaxDb" id="4896-SPAC17A2.14.1"/>
<dbReference type="EnsemblFungi" id="SPAC17A2.14.1">
    <property type="protein sequence ID" value="SPAC17A2.14.1:pep"/>
    <property type="gene ID" value="SPAC17A2.14"/>
</dbReference>
<dbReference type="PomBase" id="SPAC17A2.14"/>
<dbReference type="VEuPathDB" id="FungiDB:SPAC17A2.14"/>
<dbReference type="eggNOG" id="ENOG502QPTQ">
    <property type="taxonomic scope" value="Eukaryota"/>
</dbReference>
<dbReference type="HOGENOM" id="CLU_413973_0_0_1"/>
<dbReference type="InParanoid" id="O13779"/>
<dbReference type="OMA" id="SHEMWEL"/>
<dbReference type="PhylomeDB" id="O13779"/>
<dbReference type="PRO" id="PR:O13779"/>
<dbReference type="Proteomes" id="UP000002485">
    <property type="component" value="Chromosome I"/>
</dbReference>
<dbReference type="GO" id="GO:0005737">
    <property type="term" value="C:cytoplasm"/>
    <property type="evidence" value="ECO:0007005"/>
    <property type="project" value="PomBase"/>
</dbReference>
<dbReference type="GO" id="GO:0000329">
    <property type="term" value="C:fungal-type vacuole membrane"/>
    <property type="evidence" value="ECO:0000318"/>
    <property type="project" value="GO_Central"/>
</dbReference>
<dbReference type="GO" id="GO:1990816">
    <property type="term" value="C:vacuole-mitochondrion membrane contact site"/>
    <property type="evidence" value="ECO:0000266"/>
    <property type="project" value="PomBase"/>
</dbReference>
<dbReference type="GO" id="GO:0015095">
    <property type="term" value="F:magnesium ion transmembrane transporter activity"/>
    <property type="evidence" value="ECO:0000315"/>
    <property type="project" value="PomBase"/>
</dbReference>
<dbReference type="GO" id="GO:0010961">
    <property type="term" value="P:intracellular magnesium ion homeostasis"/>
    <property type="evidence" value="ECO:0000318"/>
    <property type="project" value="GO_Central"/>
</dbReference>
<dbReference type="GO" id="GO:1903830">
    <property type="term" value="P:magnesium ion transmembrane transport"/>
    <property type="evidence" value="ECO:0000315"/>
    <property type="project" value="PomBase"/>
</dbReference>
<dbReference type="CDD" id="cd12829">
    <property type="entry name" value="Alr1p-like"/>
    <property type="match status" value="1"/>
</dbReference>
<dbReference type="FunFam" id="3.30.460.20:FF:000029">
    <property type="entry name" value="CorA family magnesium ion transporter"/>
    <property type="match status" value="1"/>
</dbReference>
<dbReference type="FunFam" id="1.20.58.340:FF:000008">
    <property type="entry name" value="CorA family metal ion transporter"/>
    <property type="match status" value="1"/>
</dbReference>
<dbReference type="Gene3D" id="3.30.460.20">
    <property type="entry name" value="CorA soluble domain-like"/>
    <property type="match status" value="1"/>
</dbReference>
<dbReference type="Gene3D" id="1.20.58.340">
    <property type="entry name" value="Magnesium transport protein CorA, transmembrane region"/>
    <property type="match status" value="2"/>
</dbReference>
<dbReference type="InterPro" id="IPR044089">
    <property type="entry name" value="Alr1-like"/>
</dbReference>
<dbReference type="InterPro" id="IPR045861">
    <property type="entry name" value="CorA_cytoplasmic_dom"/>
</dbReference>
<dbReference type="InterPro" id="IPR045863">
    <property type="entry name" value="CorA_TM1_TM2"/>
</dbReference>
<dbReference type="InterPro" id="IPR002523">
    <property type="entry name" value="MgTranspt_CorA/ZnTranspt_ZntB"/>
</dbReference>
<dbReference type="PANTHER" id="PTHR21535">
    <property type="entry name" value="MAGNESIUM AND COBALT TRANSPORT PROTEIN/MITOCHONDRIAL IMPORT INNER MEMBRANE TRANSLOCASE SUBUNIT TIM8"/>
    <property type="match status" value="1"/>
</dbReference>
<dbReference type="PANTHER" id="PTHR21535:SF51">
    <property type="entry name" value="MANGANESE RESISTANCE PROTEIN MNR2"/>
    <property type="match status" value="1"/>
</dbReference>
<dbReference type="Pfam" id="PF01544">
    <property type="entry name" value="CorA"/>
    <property type="match status" value="1"/>
</dbReference>
<dbReference type="SUPFAM" id="SSF143865">
    <property type="entry name" value="CorA soluble domain-like"/>
    <property type="match status" value="1"/>
</dbReference>
<dbReference type="SUPFAM" id="SSF144083">
    <property type="entry name" value="Magnesium transport protein CorA, transmembrane region"/>
    <property type="match status" value="1"/>
</dbReference>
<feature type="chain" id="PRO_0000201538" description="Putative metal ion transporter C17A12.14">
    <location>
        <begin position="1"/>
        <end position="617"/>
    </location>
</feature>
<feature type="transmembrane region" description="Helical" evidence="1">
    <location>
        <begin position="560"/>
        <end position="580"/>
    </location>
</feature>
<feature type="transmembrane region" description="Helical" evidence="1">
    <location>
        <begin position="590"/>
        <end position="610"/>
    </location>
</feature>
<feature type="region of interest" description="Disordered" evidence="2">
    <location>
        <begin position="1"/>
        <end position="141"/>
    </location>
</feature>
<feature type="compositionally biased region" description="Basic and acidic residues" evidence="2">
    <location>
        <begin position="117"/>
        <end position="136"/>
    </location>
</feature>
<feature type="modified residue" description="Phosphoserine" evidence="4">
    <location>
        <position position="105"/>
    </location>
</feature>
<feature type="modified residue" description="Phosphoserine" evidence="4">
    <location>
        <position position="152"/>
    </location>
</feature>
<feature type="modified residue" description="Phosphoserine" evidence="4">
    <location>
        <position position="162"/>
    </location>
</feature>
<feature type="modified residue" description="Phosphoserine" evidence="4">
    <location>
        <position position="226"/>
    </location>
</feature>
<feature type="modified residue" description="Phosphoserine" evidence="4">
    <location>
        <position position="241"/>
    </location>
</feature>
<keyword id="KW-0472">Membrane</keyword>
<keyword id="KW-0597">Phosphoprotein</keyword>
<keyword id="KW-1185">Reference proteome</keyword>
<keyword id="KW-0812">Transmembrane</keyword>
<keyword id="KW-1133">Transmembrane helix</keyword>
<keyword id="KW-0813">Transport</keyword>
<organism>
    <name type="scientific">Schizosaccharomyces pombe (strain 972 / ATCC 24843)</name>
    <name type="common">Fission yeast</name>
    <dbReference type="NCBI Taxonomy" id="284812"/>
    <lineage>
        <taxon>Eukaryota</taxon>
        <taxon>Fungi</taxon>
        <taxon>Dikarya</taxon>
        <taxon>Ascomycota</taxon>
        <taxon>Taphrinomycotina</taxon>
        <taxon>Schizosaccharomycetes</taxon>
        <taxon>Schizosaccharomycetales</taxon>
        <taxon>Schizosaccharomycetaceae</taxon>
        <taxon>Schizosaccharomyces</taxon>
    </lineage>
</organism>
<name>YF2E_SCHPO</name>
<gene>
    <name type="ORF">SPAC17A2.14</name>
    <name type="ORF">SPAC17G6.01</name>
</gene>
<accession>O13779</accession>
<accession>O13763</accession>
<proteinExistence type="evidence at protein level"/>
<protein>
    <recommendedName>
        <fullName>Putative metal ion transporter C17A12.14</fullName>
    </recommendedName>
</protein>